<keyword id="KW-0903">Direct protein sequencing</keyword>
<keyword id="KW-1015">Disulfide bond</keyword>
<keyword id="KW-0406">Ion transport</keyword>
<keyword id="KW-0408">Iron</keyword>
<keyword id="KW-0410">Iron transport</keyword>
<keyword id="KW-0479">Metal-binding</keyword>
<keyword id="KW-0677">Repeat</keyword>
<keyword id="KW-0732">Signal</keyword>
<keyword id="KW-0813">Transport</keyword>
<feature type="signal peptide" evidence="3">
    <location>
        <begin position="1"/>
        <end position="21"/>
    </location>
</feature>
<feature type="chain" id="PRO_0000035748" description="Transferrin">
    <location>
        <begin position="22"/>
        <end position="629"/>
    </location>
</feature>
<feature type="domain" description="Transferrin-like 1" evidence="2">
    <location>
        <begin position="26"/>
        <end position="366"/>
    </location>
</feature>
<feature type="domain" description="Transferrin-like 2" evidence="2">
    <location>
        <begin position="372"/>
        <end position="621"/>
    </location>
</feature>
<feature type="binding site" evidence="2">
    <location>
        <position position="111"/>
    </location>
    <ligand>
        <name>Fe(3+)</name>
        <dbReference type="ChEBI" id="CHEBI:29034"/>
    </ligand>
</feature>
<feature type="binding site" evidence="2">
    <location>
        <position position="137"/>
    </location>
    <ligand>
        <name>hydrogencarbonate</name>
        <dbReference type="ChEBI" id="CHEBI:17544"/>
    </ligand>
</feature>
<feature type="binding site" evidence="2">
    <location>
        <position position="141"/>
    </location>
    <ligand>
        <name>hydrogencarbonate</name>
        <dbReference type="ChEBI" id="CHEBI:17544"/>
    </ligand>
</feature>
<feature type="binding site" evidence="2">
    <location>
        <position position="143"/>
    </location>
    <ligand>
        <name>hydrogencarbonate</name>
        <dbReference type="ChEBI" id="CHEBI:17544"/>
    </ligand>
</feature>
<feature type="binding site" evidence="2">
    <location>
        <position position="144"/>
    </location>
    <ligand>
        <name>hydrogencarbonate</name>
        <dbReference type="ChEBI" id="CHEBI:17544"/>
    </ligand>
</feature>
<feature type="binding site" evidence="2">
    <location>
        <position position="225"/>
    </location>
    <ligand>
        <name>Fe(3+)</name>
        <dbReference type="ChEBI" id="CHEBI:29034"/>
    </ligand>
</feature>
<feature type="binding site" evidence="2">
    <location>
        <position position="408"/>
    </location>
    <ligand>
        <name>Fe(3+)</name>
        <dbReference type="ChEBI" id="CHEBI:29034"/>
    </ligand>
</feature>
<feature type="binding site" evidence="2">
    <location>
        <position position="561"/>
    </location>
    <ligand>
        <name>Fe(3+)</name>
        <dbReference type="ChEBI" id="CHEBI:29034"/>
    </ligand>
</feature>
<feature type="disulfide bond" evidence="2">
    <location>
        <begin position="29"/>
        <end position="63"/>
    </location>
</feature>
<feature type="disulfide bond" evidence="2">
    <location>
        <begin position="38"/>
        <end position="54"/>
    </location>
</feature>
<feature type="disulfide bond" evidence="2">
    <location>
        <begin position="135"/>
        <end position="231"/>
    </location>
</feature>
<feature type="disulfide bond" evidence="2">
    <location>
        <begin position="184"/>
        <end position="210"/>
    </location>
</feature>
<feature type="disulfide bond" evidence="2">
    <location>
        <begin position="207"/>
        <end position="216"/>
    </location>
</feature>
<feature type="disulfide bond" evidence="2">
    <location>
        <begin position="270"/>
        <end position="283"/>
    </location>
</feature>
<feature type="disulfide bond" evidence="2">
    <location>
        <begin position="375"/>
        <end position="409"/>
    </location>
</feature>
<feature type="disulfide bond" evidence="2">
    <location>
        <begin position="385"/>
        <end position="403"/>
    </location>
</feature>
<comment type="function">
    <text>Transferrins are iron binding transport proteins which bind Fe(3+) ion in association with the binding of an anion, usually bicarbonate. This transferrin binds only one Fe(3+) ion per protein molecule. Transports iron ions from the hemolymph into the eggs during the vitellogenic stage (oogenesis).</text>
</comment>
<comment type="subunit">
    <text evidence="1">Monomer.</text>
</comment>
<comment type="developmental stage">
    <text>Not expressed in embryos. Maternal transferrin is used throughout embryogenesis.</text>
</comment>
<comment type="similarity">
    <text evidence="2">Belongs to the transferrin family.</text>
</comment>
<protein>
    <recommendedName>
        <fullName>Transferrin</fullName>
    </recommendedName>
</protein>
<evidence type="ECO:0000250" key="1"/>
<evidence type="ECO:0000255" key="2">
    <source>
        <dbReference type="PROSITE-ProRule" id="PRU00741"/>
    </source>
</evidence>
<evidence type="ECO:0000269" key="3">
    <source>
    </source>
</evidence>
<organism>
    <name type="scientific">Sarcophaga peregrina</name>
    <name type="common">Flesh fly</name>
    <name type="synonym">Boettcherisca peregrina</name>
    <dbReference type="NCBI Taxonomy" id="7386"/>
    <lineage>
        <taxon>Eukaryota</taxon>
        <taxon>Metazoa</taxon>
        <taxon>Ecdysozoa</taxon>
        <taxon>Arthropoda</taxon>
        <taxon>Hexapoda</taxon>
        <taxon>Insecta</taxon>
        <taxon>Pterygota</taxon>
        <taxon>Neoptera</taxon>
        <taxon>Endopterygota</taxon>
        <taxon>Diptera</taxon>
        <taxon>Brachycera</taxon>
        <taxon>Muscomorpha</taxon>
        <taxon>Oestroidea</taxon>
        <taxon>Sarcophagidae</taxon>
        <taxon>Sarcophaga</taxon>
        <taxon>Boettcherisca</taxon>
    </lineage>
</organism>
<name>TRF_SARPE</name>
<reference key="1">
    <citation type="journal article" date="1995" name="Eur. J. Biochem.">
        <title>Molecular characterization of an insect transferrin and its selective incorporation into eggs during oogenesis.</title>
        <authorList>
            <person name="Kurama T."/>
            <person name="Kurata S."/>
            <person name="Natori S."/>
        </authorList>
    </citation>
    <scope>NUCLEOTIDE SEQUENCE [MRNA]</scope>
    <scope>PROTEIN SEQUENCE OF 22-35; 71-85; 203-213; 231-244; 327-340; 391-394; 418-429 AND 480-497</scope>
    <source>
        <tissue>Hemolymph</tissue>
    </source>
</reference>
<proteinExistence type="evidence at protein level"/>
<dbReference type="EMBL" id="D28940">
    <property type="protein sequence ID" value="BAA06067.1"/>
    <property type="molecule type" value="mRNA"/>
</dbReference>
<dbReference type="PIR" id="S68986">
    <property type="entry name" value="S68986"/>
</dbReference>
<dbReference type="SMR" id="Q26643"/>
<dbReference type="GO" id="GO:0005769">
    <property type="term" value="C:early endosome"/>
    <property type="evidence" value="ECO:0007669"/>
    <property type="project" value="TreeGrafter"/>
</dbReference>
<dbReference type="GO" id="GO:0005615">
    <property type="term" value="C:extracellular space"/>
    <property type="evidence" value="ECO:0007669"/>
    <property type="project" value="InterPro"/>
</dbReference>
<dbReference type="GO" id="GO:0005886">
    <property type="term" value="C:plasma membrane"/>
    <property type="evidence" value="ECO:0007669"/>
    <property type="project" value="TreeGrafter"/>
</dbReference>
<dbReference type="GO" id="GO:0055037">
    <property type="term" value="C:recycling endosome"/>
    <property type="evidence" value="ECO:0007669"/>
    <property type="project" value="TreeGrafter"/>
</dbReference>
<dbReference type="GO" id="GO:0046872">
    <property type="term" value="F:metal ion binding"/>
    <property type="evidence" value="ECO:0007669"/>
    <property type="project" value="UniProtKB-KW"/>
</dbReference>
<dbReference type="GO" id="GO:0006826">
    <property type="term" value="P:iron ion transport"/>
    <property type="evidence" value="ECO:0007669"/>
    <property type="project" value="UniProtKB-KW"/>
</dbReference>
<dbReference type="CDD" id="cd13529">
    <property type="entry name" value="PBP2_transferrin"/>
    <property type="match status" value="1"/>
</dbReference>
<dbReference type="Gene3D" id="3.40.190.10">
    <property type="entry name" value="Periplasmic binding protein-like II"/>
    <property type="match status" value="4"/>
</dbReference>
<dbReference type="InterPro" id="IPR016357">
    <property type="entry name" value="Transferrin"/>
</dbReference>
<dbReference type="InterPro" id="IPR001156">
    <property type="entry name" value="Transferrin-like_dom"/>
</dbReference>
<dbReference type="InterPro" id="IPR018195">
    <property type="entry name" value="Transferrin_Fe_BS"/>
</dbReference>
<dbReference type="PANTHER" id="PTHR11485">
    <property type="entry name" value="TRANSFERRIN"/>
    <property type="match status" value="1"/>
</dbReference>
<dbReference type="PANTHER" id="PTHR11485:SF57">
    <property type="entry name" value="TRANSFERRIN"/>
    <property type="match status" value="1"/>
</dbReference>
<dbReference type="Pfam" id="PF00405">
    <property type="entry name" value="Transferrin"/>
    <property type="match status" value="3"/>
</dbReference>
<dbReference type="PIRSF" id="PIRSF002549">
    <property type="entry name" value="Transferrin"/>
    <property type="match status" value="1"/>
</dbReference>
<dbReference type="PRINTS" id="PR00422">
    <property type="entry name" value="TRANSFERRIN"/>
</dbReference>
<dbReference type="SMART" id="SM00094">
    <property type="entry name" value="TR_FER"/>
    <property type="match status" value="1"/>
</dbReference>
<dbReference type="SUPFAM" id="SSF53850">
    <property type="entry name" value="Periplasmic binding protein-like II"/>
    <property type="match status" value="2"/>
</dbReference>
<dbReference type="PROSITE" id="PS00206">
    <property type="entry name" value="TRANSFERRIN_LIKE_2"/>
    <property type="match status" value="1"/>
</dbReference>
<dbReference type="PROSITE" id="PS51408">
    <property type="entry name" value="TRANSFERRIN_LIKE_4"/>
    <property type="match status" value="2"/>
</dbReference>
<accession>Q26643</accession>
<sequence length="629" mass="71149">MTIKNVLKLAALLGVLALVQAEEQTYRMCVPQKYYEDCLNLLKDPSEAGIRMECVAGRDRIDCLDKINQRKADVLASEPEDMYVAYHTKNSDYKVISEIRTQEDKDAAFRYEGIILVKKNSNIHSLKELRGAKSCHTGFGRNVGFKIPVTKLKNAHILKVSMDPELTATERELKALSEFFSESCLVGTYSPYPETDRLLKKKYPNLCALCEKPEQCNYPDKFSGYDGAIRCLDKGKGEVAFTKVQFIKKYFGMVPGVTAEGDPSEFEYLCEDGSRRPLNGPACSWAQRPWTGYISNVDAVSGDEKLHNLQHRLEKFFENGLHAENKEAASHLLINPNAVYHSKPQAVDPKEYLEKAGYKDVIERDGSAIRKMKMCVQTDVEMQKCDTMRRAAYSREIRPEIECVQEKDCILAVKDNKADMVAVPAQNYKEARDGKLKPIVYESYGPNNVYVAVVDSALTKENLQSMPIHYNGQDHRAEKAAAYLNKLRGINTCQTTPSSEKNIMIVNAQQLEQYKNKQLLCSSLDKKPVTEWQSCNLEANLPVGVFIRETMTPVEQETMKHLFVSLSDKFGSKGKLPDVFTLFGQYKDNVHNVLFADDAVEFVTELKNPNTNEQTYNGLKCDTNTIKKN</sequence>